<organism>
    <name type="scientific">Dictyostelium discoideum</name>
    <name type="common">Social amoeba</name>
    <dbReference type="NCBI Taxonomy" id="44689"/>
    <lineage>
        <taxon>Eukaryota</taxon>
        <taxon>Amoebozoa</taxon>
        <taxon>Evosea</taxon>
        <taxon>Eumycetozoa</taxon>
        <taxon>Dictyostelia</taxon>
        <taxon>Dictyosteliales</taxon>
        <taxon>Dictyosteliaceae</taxon>
        <taxon>Dictyostelium</taxon>
    </lineage>
</organism>
<keyword id="KW-0030">Aminoacyl-tRNA synthetase</keyword>
<keyword id="KW-0067">ATP-binding</keyword>
<keyword id="KW-0963">Cytoplasm</keyword>
<keyword id="KW-0436">Ligase</keyword>
<keyword id="KW-0547">Nucleotide-binding</keyword>
<keyword id="KW-0648">Protein biosynthesis</keyword>
<keyword id="KW-1185">Reference proteome</keyword>
<feature type="chain" id="PRO_0000333832" description="Probable threonine--tRNA ligase 2, cytoplasmic">
    <location>
        <begin position="1"/>
        <end position="698"/>
    </location>
</feature>
<feature type="domain" description="TGS" evidence="2">
    <location>
        <begin position="38"/>
        <end position="100"/>
    </location>
</feature>
<feature type="region of interest" description="Disordered" evidence="3">
    <location>
        <begin position="541"/>
        <end position="560"/>
    </location>
</feature>
<evidence type="ECO:0000250" key="1"/>
<evidence type="ECO:0000255" key="2">
    <source>
        <dbReference type="PROSITE-ProRule" id="PRU01228"/>
    </source>
</evidence>
<evidence type="ECO:0000256" key="3">
    <source>
        <dbReference type="SAM" id="MobiDB-lite"/>
    </source>
</evidence>
<evidence type="ECO:0000305" key="4"/>
<name>SYTC2_DICDI</name>
<accession>Q8MP20</accession>
<accession>Q555M0</accession>
<accession>Q8T175</accession>
<reference key="1">
    <citation type="journal article" date="2002" name="Nature">
        <title>Sequence and analysis of chromosome 2 of Dictyostelium discoideum.</title>
        <authorList>
            <person name="Gloeckner G."/>
            <person name="Eichinger L."/>
            <person name="Szafranski K."/>
            <person name="Pachebat J.A."/>
            <person name="Bankier A.T."/>
            <person name="Dear P.H."/>
            <person name="Lehmann R."/>
            <person name="Baumgart C."/>
            <person name="Parra G."/>
            <person name="Abril J.F."/>
            <person name="Guigo R."/>
            <person name="Kumpf K."/>
            <person name="Tunggal B."/>
            <person name="Cox E.C."/>
            <person name="Quail M.A."/>
            <person name="Platzer M."/>
            <person name="Rosenthal A."/>
            <person name="Noegel A.A."/>
        </authorList>
    </citation>
    <scope>NUCLEOTIDE SEQUENCE [LARGE SCALE GENOMIC DNA]</scope>
    <source>
        <strain>AX4</strain>
    </source>
</reference>
<reference key="2">
    <citation type="journal article" date="2005" name="Nature">
        <title>The genome of the social amoeba Dictyostelium discoideum.</title>
        <authorList>
            <person name="Eichinger L."/>
            <person name="Pachebat J.A."/>
            <person name="Gloeckner G."/>
            <person name="Rajandream M.A."/>
            <person name="Sucgang R."/>
            <person name="Berriman M."/>
            <person name="Song J."/>
            <person name="Olsen R."/>
            <person name="Szafranski K."/>
            <person name="Xu Q."/>
            <person name="Tunggal B."/>
            <person name="Kummerfeld S."/>
            <person name="Madera M."/>
            <person name="Konfortov B.A."/>
            <person name="Rivero F."/>
            <person name="Bankier A.T."/>
            <person name="Lehmann R."/>
            <person name="Hamlin N."/>
            <person name="Davies R."/>
            <person name="Gaudet P."/>
            <person name="Fey P."/>
            <person name="Pilcher K."/>
            <person name="Chen G."/>
            <person name="Saunders D."/>
            <person name="Sodergren E.J."/>
            <person name="Davis P."/>
            <person name="Kerhornou A."/>
            <person name="Nie X."/>
            <person name="Hall N."/>
            <person name="Anjard C."/>
            <person name="Hemphill L."/>
            <person name="Bason N."/>
            <person name="Farbrother P."/>
            <person name="Desany B."/>
            <person name="Just E."/>
            <person name="Morio T."/>
            <person name="Rost R."/>
            <person name="Churcher C.M."/>
            <person name="Cooper J."/>
            <person name="Haydock S."/>
            <person name="van Driessche N."/>
            <person name="Cronin A."/>
            <person name="Goodhead I."/>
            <person name="Muzny D.M."/>
            <person name="Mourier T."/>
            <person name="Pain A."/>
            <person name="Lu M."/>
            <person name="Harper D."/>
            <person name="Lindsay R."/>
            <person name="Hauser H."/>
            <person name="James K.D."/>
            <person name="Quiles M."/>
            <person name="Madan Babu M."/>
            <person name="Saito T."/>
            <person name="Buchrieser C."/>
            <person name="Wardroper A."/>
            <person name="Felder M."/>
            <person name="Thangavelu M."/>
            <person name="Johnson D."/>
            <person name="Knights A."/>
            <person name="Loulseged H."/>
            <person name="Mungall K.L."/>
            <person name="Oliver K."/>
            <person name="Price C."/>
            <person name="Quail M.A."/>
            <person name="Urushihara H."/>
            <person name="Hernandez J."/>
            <person name="Rabbinowitsch E."/>
            <person name="Steffen D."/>
            <person name="Sanders M."/>
            <person name="Ma J."/>
            <person name="Kohara Y."/>
            <person name="Sharp S."/>
            <person name="Simmonds M.N."/>
            <person name="Spiegler S."/>
            <person name="Tivey A."/>
            <person name="Sugano S."/>
            <person name="White B."/>
            <person name="Walker D."/>
            <person name="Woodward J.R."/>
            <person name="Winckler T."/>
            <person name="Tanaka Y."/>
            <person name="Shaulsky G."/>
            <person name="Schleicher M."/>
            <person name="Weinstock G.M."/>
            <person name="Rosenthal A."/>
            <person name="Cox E.C."/>
            <person name="Chisholm R.L."/>
            <person name="Gibbs R.A."/>
            <person name="Loomis W.F."/>
            <person name="Platzer M."/>
            <person name="Kay R.R."/>
            <person name="Williams J.G."/>
            <person name="Dear P.H."/>
            <person name="Noegel A.A."/>
            <person name="Barrell B.G."/>
            <person name="Kuspa A."/>
        </authorList>
    </citation>
    <scope>NUCLEOTIDE SEQUENCE [LARGE SCALE GENOMIC DNA]</scope>
    <source>
        <strain>AX4</strain>
    </source>
</reference>
<sequence length="698" mass="81318">MSFLKLTKSIQKINNFNNNKINLINKYFSTTNINNSGGGGNIKLNDGRIFKFEDKQTPLTIANKINKTIGKQSILSRLNGNKLISMKEIIEMSGKDYNIEFLNFEEHSDARICFWNSSSLVLARATMEYFKNENKEIELINFGHLVNPQTADNINQGTFYIDIFFKDKNQTIKDNDINKIKKIMEYIVKRNDKFEILKNDQQDQDQDQEESFIKFGEFKFKNNFLTIDSSNSIVSLDLIKNSSVVGPNKEYSELQRIVGISFPSKDQMNNWVEIQKIAALRDHRVIGKDQELFFFHPFSPGSCFFLPHGTKIYNKLLQFLRLEYRKRGYQEVISPNIYNQKLWETSGHWDNYKDNMFSFECDHTQYSLKPMNCPGHCLMYAHRARSYKELPMRIADFGVLHRNETHGSLSGLTRVRRFQQDDAHIFCTPDMIREEIKQCLDFMKYVYTIFNFTFHLELSTRPDSYLGELSVWEKAETSLSQVLTEFCGDKWTINHGDGAFYGPKIDIHLKDANGKNHQCATIQLDFQLPIRFNLEYSGGLNNNNNNNNNNEEINDNNNNNSLNRPVMIHRALFGSVERMMAILMEHTAGKWPFWLSPRQCIVIPVSNKFNQFAQEIQSKINLAGYDVDVDLNDSKLLSKKIREATVSQYNYIIVVGQEEIDTNILNVRKRDLPEDNKQVKLSLNDLFSEFKLNIEQFK</sequence>
<dbReference type="EC" id="6.1.1.3"/>
<dbReference type="EMBL" id="AC123513">
    <property type="protein sequence ID" value="AAM44378.1"/>
    <property type="molecule type" value="Genomic_DNA"/>
</dbReference>
<dbReference type="EMBL" id="AAFI02000012">
    <property type="protein sequence ID" value="EAL70165.1"/>
    <property type="molecule type" value="Genomic_DNA"/>
</dbReference>
<dbReference type="RefSeq" id="XP_644046.1">
    <property type="nucleotide sequence ID" value="XM_638954.1"/>
</dbReference>
<dbReference type="SMR" id="Q8MP20"/>
<dbReference type="FunCoup" id="Q8MP20">
    <property type="interactions" value="45"/>
</dbReference>
<dbReference type="STRING" id="44689.Q8MP20"/>
<dbReference type="PaxDb" id="44689-DDB0231249"/>
<dbReference type="EnsemblProtists" id="EAL70165">
    <property type="protein sequence ID" value="EAL70165"/>
    <property type="gene ID" value="DDB_G0274545"/>
</dbReference>
<dbReference type="GeneID" id="8619476"/>
<dbReference type="KEGG" id="ddi:DDB_G0274545"/>
<dbReference type="dictyBase" id="DDB_G0274545">
    <property type="gene designation" value="thrS2"/>
</dbReference>
<dbReference type="VEuPathDB" id="AmoebaDB:DDB_G0274545"/>
<dbReference type="eggNOG" id="KOG1637">
    <property type="taxonomic scope" value="Eukaryota"/>
</dbReference>
<dbReference type="HOGENOM" id="CLU_008554_0_1_1"/>
<dbReference type="InParanoid" id="Q8MP20"/>
<dbReference type="OMA" id="HRNETHG"/>
<dbReference type="PhylomeDB" id="Q8MP20"/>
<dbReference type="PRO" id="PR:Q8MP20"/>
<dbReference type="Proteomes" id="UP000002195">
    <property type="component" value="Chromosome 2"/>
</dbReference>
<dbReference type="GO" id="GO:0005739">
    <property type="term" value="C:mitochondrion"/>
    <property type="evidence" value="ECO:0000318"/>
    <property type="project" value="GO_Central"/>
</dbReference>
<dbReference type="GO" id="GO:0005524">
    <property type="term" value="F:ATP binding"/>
    <property type="evidence" value="ECO:0007669"/>
    <property type="project" value="UniProtKB-KW"/>
</dbReference>
<dbReference type="GO" id="GO:0004829">
    <property type="term" value="F:threonine-tRNA ligase activity"/>
    <property type="evidence" value="ECO:0000250"/>
    <property type="project" value="dictyBase"/>
</dbReference>
<dbReference type="GO" id="GO:0006435">
    <property type="term" value="P:threonyl-tRNA aminoacylation"/>
    <property type="evidence" value="ECO:0000318"/>
    <property type="project" value="GO_Central"/>
</dbReference>
<dbReference type="CDD" id="cd01667">
    <property type="entry name" value="TGS_ThrRS"/>
    <property type="match status" value="1"/>
</dbReference>
<dbReference type="CDD" id="cd00860">
    <property type="entry name" value="ThrRS_anticodon"/>
    <property type="match status" value="1"/>
</dbReference>
<dbReference type="CDD" id="cd00771">
    <property type="entry name" value="ThrRS_core"/>
    <property type="match status" value="1"/>
</dbReference>
<dbReference type="FunFam" id="3.30.930.10:FF:000019">
    <property type="entry name" value="Threonine--tRNA ligase"/>
    <property type="match status" value="1"/>
</dbReference>
<dbReference type="Gene3D" id="3.10.20.30">
    <property type="match status" value="1"/>
</dbReference>
<dbReference type="Gene3D" id="3.40.50.800">
    <property type="entry name" value="Anticodon-binding domain"/>
    <property type="match status" value="1"/>
</dbReference>
<dbReference type="Gene3D" id="3.30.930.10">
    <property type="entry name" value="Bira Bifunctional Protein, Domain 2"/>
    <property type="match status" value="1"/>
</dbReference>
<dbReference type="Gene3D" id="3.30.980.10">
    <property type="entry name" value="Threonyl-trna Synthetase, Chain A, domain 2"/>
    <property type="match status" value="1"/>
</dbReference>
<dbReference type="InterPro" id="IPR002314">
    <property type="entry name" value="aa-tRNA-synt_IIb"/>
</dbReference>
<dbReference type="InterPro" id="IPR006195">
    <property type="entry name" value="aa-tRNA-synth_II"/>
</dbReference>
<dbReference type="InterPro" id="IPR045864">
    <property type="entry name" value="aa-tRNA-synth_II/BPL/LPL"/>
</dbReference>
<dbReference type="InterPro" id="IPR004154">
    <property type="entry name" value="Anticodon-bd"/>
</dbReference>
<dbReference type="InterPro" id="IPR036621">
    <property type="entry name" value="Anticodon-bd_dom_sf"/>
</dbReference>
<dbReference type="InterPro" id="IPR012675">
    <property type="entry name" value="Beta-grasp_dom_sf"/>
</dbReference>
<dbReference type="InterPro" id="IPR004095">
    <property type="entry name" value="TGS"/>
</dbReference>
<dbReference type="InterPro" id="IPR002320">
    <property type="entry name" value="Thr-tRNA-ligase_IIa"/>
</dbReference>
<dbReference type="InterPro" id="IPR018163">
    <property type="entry name" value="Thr/Ala-tRNA-synth_IIc_edit"/>
</dbReference>
<dbReference type="InterPro" id="IPR047246">
    <property type="entry name" value="ThrRS_anticodon"/>
</dbReference>
<dbReference type="InterPro" id="IPR033728">
    <property type="entry name" value="ThrRS_core"/>
</dbReference>
<dbReference type="NCBIfam" id="TIGR00418">
    <property type="entry name" value="thrS"/>
    <property type="match status" value="1"/>
</dbReference>
<dbReference type="PANTHER" id="PTHR11451:SF16">
    <property type="entry name" value="THREONINE--TRNA LIGASE 2, CYTOPLASMIC-RELATED"/>
    <property type="match status" value="1"/>
</dbReference>
<dbReference type="PANTHER" id="PTHR11451">
    <property type="entry name" value="THREONINE-TRNA LIGASE"/>
    <property type="match status" value="1"/>
</dbReference>
<dbReference type="Pfam" id="PF03129">
    <property type="entry name" value="HGTP_anticodon"/>
    <property type="match status" value="1"/>
</dbReference>
<dbReference type="Pfam" id="PF00587">
    <property type="entry name" value="tRNA-synt_2b"/>
    <property type="match status" value="1"/>
</dbReference>
<dbReference type="PRINTS" id="PR01047">
    <property type="entry name" value="TRNASYNTHTHR"/>
</dbReference>
<dbReference type="SUPFAM" id="SSF52954">
    <property type="entry name" value="Class II aaRS ABD-related"/>
    <property type="match status" value="1"/>
</dbReference>
<dbReference type="SUPFAM" id="SSF55681">
    <property type="entry name" value="Class II aaRS and biotin synthetases"/>
    <property type="match status" value="1"/>
</dbReference>
<dbReference type="SUPFAM" id="SSF55186">
    <property type="entry name" value="ThrRS/AlaRS common domain"/>
    <property type="match status" value="1"/>
</dbReference>
<dbReference type="PROSITE" id="PS50862">
    <property type="entry name" value="AA_TRNA_LIGASE_II"/>
    <property type="match status" value="1"/>
</dbReference>
<dbReference type="PROSITE" id="PS51880">
    <property type="entry name" value="TGS"/>
    <property type="match status" value="1"/>
</dbReference>
<proteinExistence type="inferred from homology"/>
<protein>
    <recommendedName>
        <fullName>Probable threonine--tRNA ligase 2, cytoplasmic</fullName>
        <ecNumber>6.1.1.3</ecNumber>
    </recommendedName>
    <alternativeName>
        <fullName>Threonyl-tRNA synthetase</fullName>
        <shortName>ThrRS</shortName>
    </alternativeName>
</protein>
<comment type="catalytic activity">
    <reaction>
        <text>tRNA(Thr) + L-threonine + ATP = L-threonyl-tRNA(Thr) + AMP + diphosphate + H(+)</text>
        <dbReference type="Rhea" id="RHEA:24624"/>
        <dbReference type="Rhea" id="RHEA-COMP:9670"/>
        <dbReference type="Rhea" id="RHEA-COMP:9704"/>
        <dbReference type="ChEBI" id="CHEBI:15378"/>
        <dbReference type="ChEBI" id="CHEBI:30616"/>
        <dbReference type="ChEBI" id="CHEBI:33019"/>
        <dbReference type="ChEBI" id="CHEBI:57926"/>
        <dbReference type="ChEBI" id="CHEBI:78442"/>
        <dbReference type="ChEBI" id="CHEBI:78534"/>
        <dbReference type="ChEBI" id="CHEBI:456215"/>
        <dbReference type="EC" id="6.1.1.3"/>
    </reaction>
</comment>
<comment type="subcellular location">
    <subcellularLocation>
        <location evidence="1">Cytoplasm</location>
    </subcellularLocation>
</comment>
<comment type="similarity">
    <text evidence="4">Belongs to the class-II aminoacyl-tRNA synthetase family.</text>
</comment>
<gene>
    <name type="primary">thrS2</name>
    <name type="ORF">DDB_G0274545</name>
</gene>